<keyword id="KW-0002">3D-structure</keyword>
<keyword id="KW-1003">Cell membrane</keyword>
<keyword id="KW-0903">Direct protein sequencing</keyword>
<keyword id="KW-0325">Glycoprotein</keyword>
<keyword id="KW-0336">GPI-anchor</keyword>
<keyword id="KW-0449">Lipoprotein</keyword>
<keyword id="KW-0472">Membrane</keyword>
<keyword id="KW-1267">Proteomics identification</keyword>
<keyword id="KW-1185">Reference proteome</keyword>
<keyword id="KW-0677">Repeat</keyword>
<keyword id="KW-0732">Signal</keyword>
<protein>
    <recommendedName>
        <fullName>Ly6/PLAUR domain-containing protein 3</fullName>
    </recommendedName>
    <alternativeName>
        <fullName>GPI-anchored metastasis-associated protein C4.4A homolog</fullName>
    </alternativeName>
    <alternativeName>
        <fullName>Matrigel-induced gene C4 protein</fullName>
        <shortName>MIG-C4</shortName>
    </alternativeName>
</protein>
<organism>
    <name type="scientific">Homo sapiens</name>
    <name type="common">Human</name>
    <dbReference type="NCBI Taxonomy" id="9606"/>
    <lineage>
        <taxon>Eukaryota</taxon>
        <taxon>Metazoa</taxon>
        <taxon>Chordata</taxon>
        <taxon>Craniata</taxon>
        <taxon>Vertebrata</taxon>
        <taxon>Euteleostomi</taxon>
        <taxon>Mammalia</taxon>
        <taxon>Eutheria</taxon>
        <taxon>Euarchontoglires</taxon>
        <taxon>Primates</taxon>
        <taxon>Haplorrhini</taxon>
        <taxon>Catarrhini</taxon>
        <taxon>Hominidae</taxon>
        <taxon>Homo</taxon>
    </lineage>
</organism>
<name>LYPD3_HUMAN</name>
<evidence type="ECO:0000250" key="1"/>
<evidence type="ECO:0000255" key="2"/>
<evidence type="ECO:0000256" key="3">
    <source>
        <dbReference type="SAM" id="MobiDB-lite"/>
    </source>
</evidence>
<evidence type="ECO:0000269" key="4">
    <source>
    </source>
</evidence>
<evidence type="ECO:0000269" key="5">
    <source>
    </source>
</evidence>
<evidence type="ECO:0000269" key="6">
    <source>
    </source>
</evidence>
<evidence type="ECO:0000269" key="7">
    <source>
    </source>
</evidence>
<evidence type="ECO:0007829" key="8">
    <source>
        <dbReference type="PDB" id="6IOM"/>
    </source>
</evidence>
<evidence type="ECO:0007829" key="9">
    <source>
        <dbReference type="PDB" id="6ION"/>
    </source>
</evidence>
<feature type="signal peptide" evidence="2">
    <location>
        <begin position="1"/>
        <end position="30"/>
    </location>
</feature>
<feature type="chain" id="PRO_0000226751" description="Ly6/PLAUR domain-containing protein 3">
    <location>
        <begin position="31"/>
        <end position="326"/>
    </location>
</feature>
<feature type="propeptide" id="PRO_0000226752" description="Removed in mature form" evidence="2">
    <location>
        <begin position="327"/>
        <end position="346"/>
    </location>
</feature>
<feature type="domain" description="UPAR/Ly6 1">
    <location>
        <begin position="33"/>
        <end position="126"/>
    </location>
</feature>
<feature type="domain" description="UPAR/Ly6 2">
    <location>
        <begin position="140"/>
        <end position="222"/>
    </location>
</feature>
<feature type="region of interest" description="Disordered" evidence="3">
    <location>
        <begin position="233"/>
        <end position="324"/>
    </location>
</feature>
<feature type="compositionally biased region" description="Pro residues" evidence="3">
    <location>
        <begin position="234"/>
        <end position="246"/>
    </location>
</feature>
<feature type="compositionally biased region" description="Low complexity" evidence="3">
    <location>
        <begin position="247"/>
        <end position="269"/>
    </location>
</feature>
<feature type="compositionally biased region" description="Basic and acidic residues" evidence="3">
    <location>
        <begin position="283"/>
        <end position="295"/>
    </location>
</feature>
<feature type="lipid moiety-binding region" description="GPI-anchor amidated cysteine" evidence="2">
    <location>
        <position position="326"/>
    </location>
</feature>
<feature type="glycosylation site" description="N-linked (GlcNAc...) asparagine" evidence="2">
    <location>
        <position position="118"/>
    </location>
</feature>
<feature type="glycosylation site" description="N-linked (GlcNAc...) asparagine" evidence="2">
    <location>
        <position position="163"/>
    </location>
</feature>
<feature type="glycosylation site" description="N-linked (GlcNAc...) asparagine" evidence="2">
    <location>
        <position position="176"/>
    </location>
</feature>
<feature type="glycosylation site" description="N-linked (GlcNAc...) asparagine" evidence="2">
    <location>
        <position position="183"/>
    </location>
</feature>
<feature type="strand" evidence="8">
    <location>
        <begin position="32"/>
        <end position="42"/>
    </location>
</feature>
<feature type="turn" evidence="8">
    <location>
        <begin position="46"/>
        <end position="48"/>
    </location>
</feature>
<feature type="strand" evidence="8">
    <location>
        <begin position="50"/>
        <end position="53"/>
    </location>
</feature>
<feature type="strand" evidence="8">
    <location>
        <begin position="61"/>
        <end position="70"/>
    </location>
</feature>
<feature type="strand" evidence="8">
    <location>
        <begin position="73"/>
        <end position="82"/>
    </location>
</feature>
<feature type="strand" evidence="8">
    <location>
        <begin position="87"/>
        <end position="96"/>
    </location>
</feature>
<feature type="strand" evidence="8">
    <location>
        <begin position="99"/>
        <end position="110"/>
    </location>
</feature>
<feature type="strand" evidence="8">
    <location>
        <begin position="139"/>
        <end position="141"/>
    </location>
</feature>
<feature type="strand" evidence="8">
    <location>
        <begin position="143"/>
        <end position="145"/>
    </location>
</feature>
<feature type="turn" evidence="8">
    <location>
        <begin position="148"/>
        <end position="150"/>
    </location>
</feature>
<feature type="strand" evidence="8">
    <location>
        <begin position="158"/>
        <end position="160"/>
    </location>
</feature>
<feature type="helix" evidence="8">
    <location>
        <begin position="164"/>
        <end position="166"/>
    </location>
</feature>
<feature type="strand" evidence="8">
    <location>
        <begin position="171"/>
        <end position="181"/>
    </location>
</feature>
<feature type="strand" evidence="8">
    <location>
        <begin position="184"/>
        <end position="195"/>
    </location>
</feature>
<feature type="strand" evidence="8">
    <location>
        <begin position="201"/>
        <end position="206"/>
    </location>
</feature>
<feature type="strand" evidence="8">
    <location>
        <begin position="209"/>
        <end position="216"/>
    </location>
</feature>
<feature type="helix" evidence="9">
    <location>
        <begin position="221"/>
        <end position="223"/>
    </location>
</feature>
<accession>O95274</accession>
<accession>Q9UJ74</accession>
<proteinExistence type="evidence at protein level"/>
<reference key="1">
    <citation type="journal article" date="2001" name="Cancer Res.">
        <title>Identification of genes involved in human urothelial cell-matrix interactions: implications for the progression pathways of malignant urothelium.</title>
        <authorList>
            <person name="Smith B.A."/>
            <person name="Kennedy W.J."/>
            <person name="Harnden P."/>
            <person name="Selby P.J."/>
            <person name="Trejdosiewicz L.K."/>
            <person name="Southgate J."/>
        </authorList>
    </citation>
    <scope>NUCLEOTIDE SEQUENCE [MRNA]</scope>
    <scope>FUNCTION</scope>
    <source>
        <tissue>Urothelium</tissue>
    </source>
</reference>
<reference key="2">
    <citation type="journal article" date="2001" name="Gene">
        <title>Cloning of the human homologue of the metastasis-associated rat C4.4A.</title>
        <authorList>
            <person name="Wuerfel J."/>
            <person name="Seiter S."/>
            <person name="Stassar M."/>
            <person name="Claas A."/>
            <person name="Klaes R."/>
            <person name="Roesel M."/>
            <person name="Marhaba R."/>
            <person name="Savelyeva L."/>
            <person name="Schwab M."/>
            <person name="Matzku S."/>
            <person name="Zoeller M."/>
        </authorList>
    </citation>
    <scope>NUCLEOTIDE SEQUENCE [MRNA]</scope>
    <scope>FUNCTION</scope>
    <scope>TISSUE SPECIFICITY</scope>
    <source>
        <tissue>Placenta</tissue>
    </source>
</reference>
<reference key="3">
    <citation type="journal article" date="2003" name="Genome Res.">
        <title>The secreted protein discovery initiative (SPDI), a large-scale effort to identify novel human secreted and transmembrane proteins: a bioinformatics assessment.</title>
        <authorList>
            <person name="Clark H.F."/>
            <person name="Gurney A.L."/>
            <person name="Abaya E."/>
            <person name="Baker K."/>
            <person name="Baldwin D.T."/>
            <person name="Brush J."/>
            <person name="Chen J."/>
            <person name="Chow B."/>
            <person name="Chui C."/>
            <person name="Crowley C."/>
            <person name="Currell B."/>
            <person name="Deuel B."/>
            <person name="Dowd P."/>
            <person name="Eaton D."/>
            <person name="Foster J.S."/>
            <person name="Grimaldi C."/>
            <person name="Gu Q."/>
            <person name="Hass P.E."/>
            <person name="Heldens S."/>
            <person name="Huang A."/>
            <person name="Kim H.S."/>
            <person name="Klimowski L."/>
            <person name="Jin Y."/>
            <person name="Johnson S."/>
            <person name="Lee J."/>
            <person name="Lewis L."/>
            <person name="Liao D."/>
            <person name="Mark M.R."/>
            <person name="Robbie E."/>
            <person name="Sanchez C."/>
            <person name="Schoenfeld J."/>
            <person name="Seshagiri S."/>
            <person name="Simmons L."/>
            <person name="Singh J."/>
            <person name="Smith V."/>
            <person name="Stinson J."/>
            <person name="Vagts A."/>
            <person name="Vandlen R.L."/>
            <person name="Watanabe C."/>
            <person name="Wieand D."/>
            <person name="Woods K."/>
            <person name="Xie M.-H."/>
            <person name="Yansura D.G."/>
            <person name="Yi S."/>
            <person name="Yu G."/>
            <person name="Yuan J."/>
            <person name="Zhang M."/>
            <person name="Zhang Z."/>
            <person name="Goddard A.D."/>
            <person name="Wood W.I."/>
            <person name="Godowski P.J."/>
            <person name="Gray A.M."/>
        </authorList>
    </citation>
    <scope>NUCLEOTIDE SEQUENCE [LARGE SCALE MRNA]</scope>
</reference>
<reference key="4">
    <citation type="journal article" date="2004" name="Nature">
        <title>The DNA sequence and biology of human chromosome 19.</title>
        <authorList>
            <person name="Grimwood J."/>
            <person name="Gordon L.A."/>
            <person name="Olsen A.S."/>
            <person name="Terry A."/>
            <person name="Schmutz J."/>
            <person name="Lamerdin J.E."/>
            <person name="Hellsten U."/>
            <person name="Goodstein D."/>
            <person name="Couronne O."/>
            <person name="Tran-Gyamfi M."/>
            <person name="Aerts A."/>
            <person name="Altherr M."/>
            <person name="Ashworth L."/>
            <person name="Bajorek E."/>
            <person name="Black S."/>
            <person name="Branscomb E."/>
            <person name="Caenepeel S."/>
            <person name="Carrano A.V."/>
            <person name="Caoile C."/>
            <person name="Chan Y.M."/>
            <person name="Christensen M."/>
            <person name="Cleland C.A."/>
            <person name="Copeland A."/>
            <person name="Dalin E."/>
            <person name="Dehal P."/>
            <person name="Denys M."/>
            <person name="Detter J.C."/>
            <person name="Escobar J."/>
            <person name="Flowers D."/>
            <person name="Fotopulos D."/>
            <person name="Garcia C."/>
            <person name="Georgescu A.M."/>
            <person name="Glavina T."/>
            <person name="Gomez M."/>
            <person name="Gonzales E."/>
            <person name="Groza M."/>
            <person name="Hammon N."/>
            <person name="Hawkins T."/>
            <person name="Haydu L."/>
            <person name="Ho I."/>
            <person name="Huang W."/>
            <person name="Israni S."/>
            <person name="Jett J."/>
            <person name="Kadner K."/>
            <person name="Kimball H."/>
            <person name="Kobayashi A."/>
            <person name="Larionov V."/>
            <person name="Leem S.-H."/>
            <person name="Lopez F."/>
            <person name="Lou Y."/>
            <person name="Lowry S."/>
            <person name="Malfatti S."/>
            <person name="Martinez D."/>
            <person name="McCready P.M."/>
            <person name="Medina C."/>
            <person name="Morgan J."/>
            <person name="Nelson K."/>
            <person name="Nolan M."/>
            <person name="Ovcharenko I."/>
            <person name="Pitluck S."/>
            <person name="Pollard M."/>
            <person name="Popkie A.P."/>
            <person name="Predki P."/>
            <person name="Quan G."/>
            <person name="Ramirez L."/>
            <person name="Rash S."/>
            <person name="Retterer J."/>
            <person name="Rodriguez A."/>
            <person name="Rogers S."/>
            <person name="Salamov A."/>
            <person name="Salazar A."/>
            <person name="She X."/>
            <person name="Smith D."/>
            <person name="Slezak T."/>
            <person name="Solovyev V."/>
            <person name="Thayer N."/>
            <person name="Tice H."/>
            <person name="Tsai M."/>
            <person name="Ustaszewska A."/>
            <person name="Vo N."/>
            <person name="Wagner M."/>
            <person name="Wheeler J."/>
            <person name="Wu K."/>
            <person name="Xie G."/>
            <person name="Yang J."/>
            <person name="Dubchak I."/>
            <person name="Furey T.S."/>
            <person name="DeJong P."/>
            <person name="Dickson M."/>
            <person name="Gordon D."/>
            <person name="Eichler E.E."/>
            <person name="Pennacchio L.A."/>
            <person name="Richardson P."/>
            <person name="Stubbs L."/>
            <person name="Rokhsar D.S."/>
            <person name="Myers R.M."/>
            <person name="Rubin E.M."/>
            <person name="Lucas S.M."/>
        </authorList>
    </citation>
    <scope>NUCLEOTIDE SEQUENCE [LARGE SCALE GENOMIC DNA]</scope>
</reference>
<reference key="5">
    <citation type="journal article" date="2004" name="Genome Res.">
        <title>The status, quality, and expansion of the NIH full-length cDNA project: the Mammalian Gene Collection (MGC).</title>
        <authorList>
            <consortium name="The MGC Project Team"/>
        </authorList>
    </citation>
    <scope>NUCLEOTIDE SEQUENCE [LARGE SCALE MRNA]</scope>
    <source>
        <tissue>Skin</tissue>
    </source>
</reference>
<reference key="6">
    <citation type="journal article" date="2004" name="Biochem. Eng. J.">
        <title>Structural analysis and tissue localization of human C4.4A: a protein homologue of the urokinase receptor.</title>
        <authorList>
            <person name="Hansen L.V."/>
            <person name="Gaardsvoll H."/>
            <person name="Nielsen B.S."/>
            <person name="Lund L.R."/>
            <person name="Danoe K."/>
            <person name="Jensen O.N."/>
            <person name="Ploug M."/>
        </authorList>
    </citation>
    <scope>PROTEIN SEQUENCE OF 196-216</scope>
    <scope>FUNCTION</scope>
    <scope>TISSUE SPECIFICITY</scope>
    <scope>GLYCOSYLATION</scope>
    <scope>GPI-ANCHOR</scope>
</reference>
<reference key="7">
    <citation type="journal article" date="2003" name="Br. J. Cancer">
        <title>hAG-2 and hAG-3, human homologues of genes involved in differentiation, are associated with oestrogen receptor-positive breast tumours and interact with metastasis gene C4.4a and dystroglycan.</title>
        <authorList>
            <person name="Fletcher G.C."/>
            <person name="Patel S."/>
            <person name="Tyson K."/>
            <person name="Adam P.J."/>
            <person name="Schenker M."/>
            <person name="Loader J.A."/>
            <person name="Daviet L."/>
            <person name="Legrain P."/>
            <person name="Parekh R."/>
            <person name="Harris A.L."/>
            <person name="Terrett J.A."/>
        </authorList>
    </citation>
    <scope>FUNCTION</scope>
    <scope>TISSUE SPECIFICITY</scope>
    <scope>INTERACTION WITH AGR2 AND AGR3</scope>
</reference>
<comment type="function">
    <text evidence="4 5 6 7">Supports cell migration. May be involved in urothelial cell-matrix interactions. May be involved in tumor progression.</text>
</comment>
<comment type="subunit">
    <text evidence="1 6">Binds laminin-1 and laminin-5. Interacts with LGALS3 (By similarity). Interacts with AGR2 and AGR3.</text>
</comment>
<comment type="subcellular location">
    <subcellularLocation>
        <location>Cell membrane</location>
        <topology>Lipid-anchor</topology>
        <topology>GPI-anchor</topology>
    </subcellularLocation>
</comment>
<comment type="tissue specificity">
    <text evidence="4 6 7">Expressed in placenta, skin and urothelium. Found in suprabasal keratinocytes of chronic wounds. Weak expression is found in esophagus and peripheral blood mononuclear cells. Found in the majority of primary and metastatic transitional cell carcinomas (TCCs) and as well in breast cancer tissues, but not in adjacent normal tissues. High expression is found in the tumor component of some noninvasive superficial lesions and in invasive and metastatic urothelial cancers.</text>
</comment>
<comment type="induction">
    <text>Up-regulated in migrating keratinocytes during epithelization of incisional skin wounds.</text>
</comment>
<comment type="PTM">
    <text evidence="7">N-glycosylated and O-glycosylated.</text>
</comment>
<comment type="online information" name="Atlas of Genetics and Cytogenetics in Oncology and Haematology">
    <link uri="https://atlasgeneticsoncology.org/gene/44245/LYPD3"/>
</comment>
<sequence>MDPARKAGAQAMIWTAGWLLLLLLRGGAQALECYSCVQKADDGCSPNKMKTVKCAPGVDVCTEAVGAVETIHGQFSLAVRGCGSGLPGKNDRGLDLHGLLAFIQLQQCAQDRCNAKLNLTSRALDPAGNESAYPPNGVECYSCVGLSREACQGTSPPVVSCYNASDHVYKGCFDGNVTLTAANVTVSLPVRGCVQDEFCTRDGVTGPGFTLSGSCCQGSRCNSDLRNKTYFSPRIPPLVRLPPPEPTTVASTTSVTTSTSAPVRPTSTTKPMPAPTSQTPRQGVEHEASRDEEPRLTGGAAGHQDRSNSGQYPAKGGPQQPHNKGCVAPTAGLAALLLAVAAGVLL</sequence>
<gene>
    <name type="primary">LYPD3</name>
    <name type="synonym">C4.4A</name>
    <name type="ORF">UNQ491/PRO1007</name>
</gene>
<dbReference type="EMBL" id="AF082889">
    <property type="protein sequence ID" value="AAD13751.1"/>
    <property type="molecule type" value="mRNA"/>
</dbReference>
<dbReference type="EMBL" id="AJ223603">
    <property type="protein sequence ID" value="CAA11469.2"/>
    <property type="molecule type" value="mRNA"/>
</dbReference>
<dbReference type="EMBL" id="AY359006">
    <property type="protein sequence ID" value="AAQ89365.1"/>
    <property type="molecule type" value="mRNA"/>
</dbReference>
<dbReference type="EMBL" id="AC018758">
    <property type="protein sequence ID" value="AAG09062.1"/>
    <property type="molecule type" value="Genomic_DNA"/>
</dbReference>
<dbReference type="EMBL" id="BC039167">
    <property type="protein sequence ID" value="AAH39167.1"/>
    <property type="molecule type" value="mRNA"/>
</dbReference>
<dbReference type="CCDS" id="CCDS12620.1"/>
<dbReference type="RefSeq" id="NP_055215.2">
    <property type="nucleotide sequence ID" value="NM_014400.3"/>
</dbReference>
<dbReference type="PDB" id="6IOM">
    <property type="method" value="X-ray"/>
    <property type="resolution" value="2.59 A"/>
    <property type="chains" value="A/B=31-231"/>
</dbReference>
<dbReference type="PDB" id="6ION">
    <property type="method" value="X-ray"/>
    <property type="resolution" value="2.75 A"/>
    <property type="chains" value="A=31-231"/>
</dbReference>
<dbReference type="PDBsum" id="6IOM"/>
<dbReference type="PDBsum" id="6ION"/>
<dbReference type="SMR" id="O95274"/>
<dbReference type="BioGRID" id="117985">
    <property type="interactions" value="142"/>
</dbReference>
<dbReference type="FunCoup" id="O95274">
    <property type="interactions" value="183"/>
</dbReference>
<dbReference type="IntAct" id="O95274">
    <property type="interactions" value="110"/>
</dbReference>
<dbReference type="MINT" id="O95274"/>
<dbReference type="STRING" id="9606.ENSP00000244333"/>
<dbReference type="GlyCosmos" id="O95274">
    <property type="glycosylation" value="4 sites, No reported glycans"/>
</dbReference>
<dbReference type="GlyGen" id="O95274">
    <property type="glycosylation" value="10 sites, 6 N-linked glycans (6 sites), 2 O-linked glycans (3 sites)"/>
</dbReference>
<dbReference type="iPTMnet" id="O95274"/>
<dbReference type="PhosphoSitePlus" id="O95274"/>
<dbReference type="BioMuta" id="LYPD3"/>
<dbReference type="jPOST" id="O95274"/>
<dbReference type="MassIVE" id="O95274"/>
<dbReference type="PaxDb" id="9606-ENSP00000244333"/>
<dbReference type="PeptideAtlas" id="O95274"/>
<dbReference type="PRIDE" id="O95274"/>
<dbReference type="ProteomicsDB" id="50778"/>
<dbReference type="ABCD" id="O95274">
    <property type="antibodies" value="2 sequenced antibodies"/>
</dbReference>
<dbReference type="Antibodypedia" id="45382">
    <property type="antibodies" value="272 antibodies from 28 providers"/>
</dbReference>
<dbReference type="DNASU" id="27076"/>
<dbReference type="Ensembl" id="ENST00000244333.4">
    <property type="protein sequence ID" value="ENSP00000244333.2"/>
    <property type="gene ID" value="ENSG00000124466.9"/>
</dbReference>
<dbReference type="GeneID" id="27076"/>
<dbReference type="KEGG" id="hsa:27076"/>
<dbReference type="MANE-Select" id="ENST00000244333.4">
    <property type="protein sequence ID" value="ENSP00000244333.2"/>
    <property type="RefSeq nucleotide sequence ID" value="NM_014400.3"/>
    <property type="RefSeq protein sequence ID" value="NP_055215.2"/>
</dbReference>
<dbReference type="UCSC" id="uc002owl.2">
    <property type="organism name" value="human"/>
</dbReference>
<dbReference type="AGR" id="HGNC:24880"/>
<dbReference type="CTD" id="27076"/>
<dbReference type="DisGeNET" id="27076"/>
<dbReference type="GeneCards" id="LYPD3"/>
<dbReference type="HGNC" id="HGNC:24880">
    <property type="gene designation" value="LYPD3"/>
</dbReference>
<dbReference type="HPA" id="ENSG00000124466">
    <property type="expression patterns" value="Tissue enhanced (esophagus, skin, vagina)"/>
</dbReference>
<dbReference type="MIM" id="609484">
    <property type="type" value="gene"/>
</dbReference>
<dbReference type="neXtProt" id="NX_O95274"/>
<dbReference type="OpenTargets" id="ENSG00000124466"/>
<dbReference type="PharmGKB" id="PA142671490"/>
<dbReference type="VEuPathDB" id="HostDB:ENSG00000124466"/>
<dbReference type="eggNOG" id="ENOG502RYZP">
    <property type="taxonomic scope" value="Eukaryota"/>
</dbReference>
<dbReference type="GeneTree" id="ENSGT00940000153599"/>
<dbReference type="HOGENOM" id="CLU_062960_0_0_1"/>
<dbReference type="InParanoid" id="O95274"/>
<dbReference type="OMA" id="VQDELCT"/>
<dbReference type="OrthoDB" id="9834667at2759"/>
<dbReference type="PAN-GO" id="O95274">
    <property type="GO annotations" value="1 GO annotation based on evolutionary models"/>
</dbReference>
<dbReference type="PhylomeDB" id="O95274"/>
<dbReference type="TreeFam" id="TF337983"/>
<dbReference type="PathwayCommons" id="O95274"/>
<dbReference type="Reactome" id="R-HSA-163125">
    <property type="pathway name" value="Post-translational modification: synthesis of GPI-anchored proteins"/>
</dbReference>
<dbReference type="SignaLink" id="O95274"/>
<dbReference type="BioGRID-ORCS" id="27076">
    <property type="hits" value="12 hits in 1153 CRISPR screens"/>
</dbReference>
<dbReference type="ChiTaRS" id="LYPD3">
    <property type="organism name" value="human"/>
</dbReference>
<dbReference type="GeneWiki" id="LYPD3"/>
<dbReference type="GenomeRNAi" id="27076"/>
<dbReference type="Pharos" id="O95274">
    <property type="development level" value="Tbio"/>
</dbReference>
<dbReference type="PRO" id="PR:O95274"/>
<dbReference type="Proteomes" id="UP000005640">
    <property type="component" value="Chromosome 19"/>
</dbReference>
<dbReference type="RNAct" id="O95274">
    <property type="molecule type" value="protein"/>
</dbReference>
<dbReference type="Bgee" id="ENSG00000124466">
    <property type="expression patterns" value="Expressed in gingival epithelium and 130 other cell types or tissues"/>
</dbReference>
<dbReference type="ExpressionAtlas" id="O95274">
    <property type="expression patterns" value="baseline and differential"/>
</dbReference>
<dbReference type="GO" id="GO:0005576">
    <property type="term" value="C:extracellular region"/>
    <property type="evidence" value="ECO:0000304"/>
    <property type="project" value="Reactome"/>
</dbReference>
<dbReference type="GO" id="GO:0005615">
    <property type="term" value="C:extracellular space"/>
    <property type="evidence" value="ECO:0007005"/>
    <property type="project" value="UniProtKB"/>
</dbReference>
<dbReference type="GO" id="GO:0005886">
    <property type="term" value="C:plasma membrane"/>
    <property type="evidence" value="ECO:0000318"/>
    <property type="project" value="GO_Central"/>
</dbReference>
<dbReference type="GO" id="GO:0098552">
    <property type="term" value="C:side of membrane"/>
    <property type="evidence" value="ECO:0007669"/>
    <property type="project" value="UniProtKB-KW"/>
</dbReference>
<dbReference type="GO" id="GO:0043236">
    <property type="term" value="F:laminin binding"/>
    <property type="evidence" value="ECO:0007669"/>
    <property type="project" value="Ensembl"/>
</dbReference>
<dbReference type="GO" id="GO:0007160">
    <property type="term" value="P:cell-matrix adhesion"/>
    <property type="evidence" value="ECO:0007669"/>
    <property type="project" value="Ensembl"/>
</dbReference>
<dbReference type="GO" id="GO:0034392">
    <property type="term" value="P:negative regulation of smooth muscle cell apoptotic process"/>
    <property type="evidence" value="ECO:0000316"/>
    <property type="project" value="ARUK-UCL"/>
</dbReference>
<dbReference type="CDD" id="cd23562">
    <property type="entry name" value="TFP_LU_ECD_LYPD3_rpt1"/>
    <property type="match status" value="1"/>
</dbReference>
<dbReference type="CDD" id="cd23563">
    <property type="entry name" value="TFP_LU_ECD_LYPD3_rpt2"/>
    <property type="match status" value="1"/>
</dbReference>
<dbReference type="FunFam" id="2.10.60.10:FF:000016">
    <property type="entry name" value="LY6/PLAUR domain containing 3"/>
    <property type="match status" value="1"/>
</dbReference>
<dbReference type="FunFam" id="2.10.60.10:FF:000017">
    <property type="entry name" value="Ly6/PLAUR domain-containing protein 3"/>
    <property type="match status" value="1"/>
</dbReference>
<dbReference type="Gene3D" id="2.10.60.10">
    <property type="entry name" value="CD59"/>
    <property type="match status" value="2"/>
</dbReference>
<dbReference type="InterPro" id="IPR016054">
    <property type="entry name" value="LY6_UPA_recep-like"/>
</dbReference>
<dbReference type="InterPro" id="IPR045860">
    <property type="entry name" value="Snake_toxin-like_sf"/>
</dbReference>
<dbReference type="PANTHER" id="PTHR10624:SF8">
    <property type="entry name" value="LY6_PLAUR DOMAIN-CONTAINING PROTEIN 3"/>
    <property type="match status" value="1"/>
</dbReference>
<dbReference type="PANTHER" id="PTHR10624">
    <property type="entry name" value="UROKINASE PLASMINOGEN ACTIVATOR SURFACE RECEPTOR-RELATED"/>
    <property type="match status" value="1"/>
</dbReference>
<dbReference type="Pfam" id="PF00021">
    <property type="entry name" value="UPAR_LY6"/>
    <property type="match status" value="2"/>
</dbReference>
<dbReference type="SMART" id="SM00134">
    <property type="entry name" value="LU"/>
    <property type="match status" value="1"/>
</dbReference>
<dbReference type="SUPFAM" id="SSF57302">
    <property type="entry name" value="Snake toxin-like"/>
    <property type="match status" value="2"/>
</dbReference>